<dbReference type="EMBL" id="CP000551">
    <property type="protein sequence ID" value="ABM71045.1"/>
    <property type="molecule type" value="Genomic_DNA"/>
</dbReference>
<dbReference type="RefSeq" id="WP_002807290.1">
    <property type="nucleotide sequence ID" value="NC_008816.1"/>
</dbReference>
<dbReference type="SMR" id="A2BTD4"/>
<dbReference type="STRING" id="146891.A9601_17621"/>
<dbReference type="KEGG" id="pmb:A9601_17621"/>
<dbReference type="eggNOG" id="COG0090">
    <property type="taxonomic scope" value="Bacteria"/>
</dbReference>
<dbReference type="HOGENOM" id="CLU_036235_2_1_3"/>
<dbReference type="OrthoDB" id="9778722at2"/>
<dbReference type="Proteomes" id="UP000002590">
    <property type="component" value="Chromosome"/>
</dbReference>
<dbReference type="GO" id="GO:0015934">
    <property type="term" value="C:large ribosomal subunit"/>
    <property type="evidence" value="ECO:0007669"/>
    <property type="project" value="InterPro"/>
</dbReference>
<dbReference type="GO" id="GO:0019843">
    <property type="term" value="F:rRNA binding"/>
    <property type="evidence" value="ECO:0007669"/>
    <property type="project" value="UniProtKB-UniRule"/>
</dbReference>
<dbReference type="GO" id="GO:0003735">
    <property type="term" value="F:structural constituent of ribosome"/>
    <property type="evidence" value="ECO:0007669"/>
    <property type="project" value="InterPro"/>
</dbReference>
<dbReference type="GO" id="GO:0016740">
    <property type="term" value="F:transferase activity"/>
    <property type="evidence" value="ECO:0007669"/>
    <property type="project" value="InterPro"/>
</dbReference>
<dbReference type="GO" id="GO:0006412">
    <property type="term" value="P:translation"/>
    <property type="evidence" value="ECO:0007669"/>
    <property type="project" value="UniProtKB-UniRule"/>
</dbReference>
<dbReference type="FunFam" id="2.30.30.30:FF:000001">
    <property type="entry name" value="50S ribosomal protein L2"/>
    <property type="match status" value="1"/>
</dbReference>
<dbReference type="FunFam" id="2.40.50.140:FF:000003">
    <property type="entry name" value="50S ribosomal protein L2"/>
    <property type="match status" value="1"/>
</dbReference>
<dbReference type="FunFam" id="4.10.950.10:FF:000001">
    <property type="entry name" value="50S ribosomal protein L2"/>
    <property type="match status" value="1"/>
</dbReference>
<dbReference type="Gene3D" id="2.30.30.30">
    <property type="match status" value="1"/>
</dbReference>
<dbReference type="Gene3D" id="2.40.50.140">
    <property type="entry name" value="Nucleic acid-binding proteins"/>
    <property type="match status" value="1"/>
</dbReference>
<dbReference type="Gene3D" id="4.10.950.10">
    <property type="entry name" value="Ribosomal protein L2, domain 3"/>
    <property type="match status" value="1"/>
</dbReference>
<dbReference type="HAMAP" id="MF_01320_B">
    <property type="entry name" value="Ribosomal_uL2_B"/>
    <property type="match status" value="1"/>
</dbReference>
<dbReference type="InterPro" id="IPR012340">
    <property type="entry name" value="NA-bd_OB-fold"/>
</dbReference>
<dbReference type="InterPro" id="IPR014722">
    <property type="entry name" value="Rib_uL2_dom2"/>
</dbReference>
<dbReference type="InterPro" id="IPR002171">
    <property type="entry name" value="Ribosomal_uL2"/>
</dbReference>
<dbReference type="InterPro" id="IPR005880">
    <property type="entry name" value="Ribosomal_uL2_bac/org-type"/>
</dbReference>
<dbReference type="InterPro" id="IPR022669">
    <property type="entry name" value="Ribosomal_uL2_C"/>
</dbReference>
<dbReference type="InterPro" id="IPR022671">
    <property type="entry name" value="Ribosomal_uL2_CS"/>
</dbReference>
<dbReference type="InterPro" id="IPR014726">
    <property type="entry name" value="Ribosomal_uL2_dom3"/>
</dbReference>
<dbReference type="InterPro" id="IPR022666">
    <property type="entry name" value="Ribosomal_uL2_RNA-bd_dom"/>
</dbReference>
<dbReference type="InterPro" id="IPR008991">
    <property type="entry name" value="Translation_prot_SH3-like_sf"/>
</dbReference>
<dbReference type="NCBIfam" id="TIGR01171">
    <property type="entry name" value="rplB_bact"/>
    <property type="match status" value="1"/>
</dbReference>
<dbReference type="PANTHER" id="PTHR13691:SF5">
    <property type="entry name" value="LARGE RIBOSOMAL SUBUNIT PROTEIN UL2M"/>
    <property type="match status" value="1"/>
</dbReference>
<dbReference type="PANTHER" id="PTHR13691">
    <property type="entry name" value="RIBOSOMAL PROTEIN L2"/>
    <property type="match status" value="1"/>
</dbReference>
<dbReference type="Pfam" id="PF00181">
    <property type="entry name" value="Ribosomal_L2"/>
    <property type="match status" value="1"/>
</dbReference>
<dbReference type="Pfam" id="PF03947">
    <property type="entry name" value="Ribosomal_L2_C"/>
    <property type="match status" value="1"/>
</dbReference>
<dbReference type="PIRSF" id="PIRSF002158">
    <property type="entry name" value="Ribosomal_L2"/>
    <property type="match status" value="1"/>
</dbReference>
<dbReference type="SMART" id="SM01383">
    <property type="entry name" value="Ribosomal_L2"/>
    <property type="match status" value="1"/>
</dbReference>
<dbReference type="SMART" id="SM01382">
    <property type="entry name" value="Ribosomal_L2_C"/>
    <property type="match status" value="1"/>
</dbReference>
<dbReference type="SUPFAM" id="SSF50249">
    <property type="entry name" value="Nucleic acid-binding proteins"/>
    <property type="match status" value="1"/>
</dbReference>
<dbReference type="SUPFAM" id="SSF50104">
    <property type="entry name" value="Translation proteins SH3-like domain"/>
    <property type="match status" value="1"/>
</dbReference>
<dbReference type="PROSITE" id="PS00467">
    <property type="entry name" value="RIBOSOMAL_L2"/>
    <property type="match status" value="1"/>
</dbReference>
<feature type="chain" id="PRO_0000309981" description="Large ribosomal subunit protein uL2">
    <location>
        <begin position="1"/>
        <end position="287"/>
    </location>
</feature>
<feature type="region of interest" description="Disordered" evidence="2">
    <location>
        <begin position="221"/>
        <end position="287"/>
    </location>
</feature>
<feature type="compositionally biased region" description="Basic residues" evidence="2">
    <location>
        <begin position="258"/>
        <end position="287"/>
    </location>
</feature>
<name>RL2_PROMS</name>
<proteinExistence type="inferred from homology"/>
<organism>
    <name type="scientific">Prochlorococcus marinus (strain AS9601)</name>
    <dbReference type="NCBI Taxonomy" id="146891"/>
    <lineage>
        <taxon>Bacteria</taxon>
        <taxon>Bacillati</taxon>
        <taxon>Cyanobacteriota</taxon>
        <taxon>Cyanophyceae</taxon>
        <taxon>Synechococcales</taxon>
        <taxon>Prochlorococcaceae</taxon>
        <taxon>Prochlorococcus</taxon>
    </lineage>
</organism>
<comment type="function">
    <text evidence="1">One of the primary rRNA binding proteins. Required for association of the 30S and 50S subunits to form the 70S ribosome, for tRNA binding and peptide bond formation. It has been suggested to have peptidyltransferase activity; this is somewhat controversial. Makes several contacts with the 16S rRNA in the 70S ribosome.</text>
</comment>
<comment type="subunit">
    <text evidence="1">Part of the 50S ribosomal subunit. Forms a bridge to the 30S subunit in the 70S ribosome.</text>
</comment>
<comment type="similarity">
    <text evidence="1">Belongs to the universal ribosomal protein uL2 family.</text>
</comment>
<accession>A2BTD4</accession>
<gene>
    <name evidence="1" type="primary">rplB</name>
    <name evidence="1" type="synonym">rpl2</name>
    <name type="ordered locus">A9601_17621</name>
</gene>
<sequence length="287" mass="31754">MAIRKFKPYTPGTRQRVVTDFSEITSAKPERSLIVSKHRVKGRNNRGVITCRHRGGGHKRQYRLVDFRRDKRNINAKVAAIHYDPHRNARLALLFYEDGEKRYIIAPAGVKVGQNVISGESVPIEDGNAMPLSVMPLGSSVHCVELYAGRGAQMVRSAGASAQVMAKEGDYVALKLPSTEVRLVRKECYATLGEVGNSEIRNTSLGKAGRRRWLGRRPQVRGSVMNPCDHPHGGGEGKAPIGRAGPVTPWGKPALGLKTRKKNKPSNKLVVRRRRRVSKRSRGGRDS</sequence>
<reference key="1">
    <citation type="journal article" date="2007" name="PLoS Genet.">
        <title>Patterns and implications of gene gain and loss in the evolution of Prochlorococcus.</title>
        <authorList>
            <person name="Kettler G.C."/>
            <person name="Martiny A.C."/>
            <person name="Huang K."/>
            <person name="Zucker J."/>
            <person name="Coleman M.L."/>
            <person name="Rodrigue S."/>
            <person name="Chen F."/>
            <person name="Lapidus A."/>
            <person name="Ferriera S."/>
            <person name="Johnson J."/>
            <person name="Steglich C."/>
            <person name="Church G.M."/>
            <person name="Richardson P."/>
            <person name="Chisholm S.W."/>
        </authorList>
    </citation>
    <scope>NUCLEOTIDE SEQUENCE [LARGE SCALE GENOMIC DNA]</scope>
    <source>
        <strain>AS9601</strain>
    </source>
</reference>
<protein>
    <recommendedName>
        <fullName evidence="1">Large ribosomal subunit protein uL2</fullName>
    </recommendedName>
    <alternativeName>
        <fullName evidence="3">50S ribosomal protein L2</fullName>
    </alternativeName>
</protein>
<keyword id="KW-0687">Ribonucleoprotein</keyword>
<keyword id="KW-0689">Ribosomal protein</keyword>
<keyword id="KW-0694">RNA-binding</keyword>
<keyword id="KW-0699">rRNA-binding</keyword>
<evidence type="ECO:0000255" key="1">
    <source>
        <dbReference type="HAMAP-Rule" id="MF_01320"/>
    </source>
</evidence>
<evidence type="ECO:0000256" key="2">
    <source>
        <dbReference type="SAM" id="MobiDB-lite"/>
    </source>
</evidence>
<evidence type="ECO:0000305" key="3"/>